<geneLocation type="chloroplast"/>
<proteinExistence type="inferred from homology"/>
<feature type="propeptide" id="PRO_0000031293" evidence="1">
    <location>
        <begin position="1"/>
        <end position="2"/>
    </location>
</feature>
<feature type="chain" id="PRO_0000031294" description="Ribulose bisphosphate carboxylase large chain">
    <location>
        <begin position="3"/>
        <end position="475"/>
    </location>
</feature>
<feature type="active site" description="Proton acceptor" evidence="1">
    <location>
        <position position="175"/>
    </location>
</feature>
<feature type="active site" description="Proton acceptor" evidence="1">
    <location>
        <position position="294"/>
    </location>
</feature>
<feature type="binding site" description="in homodimeric partner" evidence="1">
    <location>
        <position position="123"/>
    </location>
    <ligand>
        <name>substrate</name>
    </ligand>
</feature>
<feature type="binding site" evidence="1">
    <location>
        <position position="173"/>
    </location>
    <ligand>
        <name>substrate</name>
    </ligand>
</feature>
<feature type="binding site" evidence="1">
    <location>
        <position position="177"/>
    </location>
    <ligand>
        <name>substrate</name>
    </ligand>
</feature>
<feature type="binding site" description="via carbamate group" evidence="1">
    <location>
        <position position="201"/>
    </location>
    <ligand>
        <name>Mg(2+)</name>
        <dbReference type="ChEBI" id="CHEBI:18420"/>
    </ligand>
</feature>
<feature type="binding site" evidence="1">
    <location>
        <position position="203"/>
    </location>
    <ligand>
        <name>Mg(2+)</name>
        <dbReference type="ChEBI" id="CHEBI:18420"/>
    </ligand>
</feature>
<feature type="binding site" evidence="1">
    <location>
        <position position="204"/>
    </location>
    <ligand>
        <name>Mg(2+)</name>
        <dbReference type="ChEBI" id="CHEBI:18420"/>
    </ligand>
</feature>
<feature type="binding site" evidence="1">
    <location>
        <position position="295"/>
    </location>
    <ligand>
        <name>substrate</name>
    </ligand>
</feature>
<feature type="binding site" evidence="1">
    <location>
        <position position="327"/>
    </location>
    <ligand>
        <name>substrate</name>
    </ligand>
</feature>
<feature type="binding site" evidence="1">
    <location>
        <position position="379"/>
    </location>
    <ligand>
        <name>substrate</name>
    </ligand>
</feature>
<feature type="site" description="Transition state stabilizer" evidence="1">
    <location>
        <position position="334"/>
    </location>
</feature>
<feature type="modified residue" description="N-acetylproline" evidence="1">
    <location>
        <position position="3"/>
    </location>
</feature>
<feature type="modified residue" description="N6,N6,N6-trimethyllysine" evidence="1">
    <location>
        <position position="14"/>
    </location>
</feature>
<feature type="modified residue" description="N6-carboxylysine" evidence="1">
    <location>
        <position position="201"/>
    </location>
</feature>
<feature type="disulfide bond" description="Interchain; in linked form" evidence="1">
    <location>
        <position position="247"/>
    </location>
</feature>
<sequence length="475" mass="52628">MSPKTETKASVGFKAGVKEYKLTYYTPEYETKDTDILAAFRVTPQPGVPPEEAGAAVAAESSTGTWTTVWTDGLTSLDRYKGRCYHIEPVPGEESQFIAYVAYPLDLFEEGSVTNMFTSIVGNVFGFKALRALRLEDLRIPTAYVKTFQGPPHGIQVERDKLNKYGRPLLGCTIKPKLGLSAKNYGRAVYECLRGGLDFTKDDENVNSQPFMRWRDRFLFCAEALYKAQAETGEIKGHYLNATAGTCEEMMKRAIFARELGVPIVMHDYLTGGFTANTSLAHYCRDNGLLLHIHRAMHAVIDRQKNHGIHFRVLAKALRMSGGDHIHSGTVVGKLEGERDITLGFVDLLRDDFIEKDRSRGIYFTQDWVSLPGVLPVASGGIHVWHMPALTEIFGDDSVLQFGGGTLGHPWGNAPGAVANRVALEACVQARNEGRDLASQGNEIIREASKWSPELAAACEVWKEIKFEFKAVDTL</sequence>
<name>RBL_MAGTR</name>
<accession>P61293</accession>
<keyword id="KW-0007">Acetylation</keyword>
<keyword id="KW-0113">Calvin cycle</keyword>
<keyword id="KW-0120">Carbon dioxide fixation</keyword>
<keyword id="KW-0150">Chloroplast</keyword>
<keyword id="KW-1015">Disulfide bond</keyword>
<keyword id="KW-0456">Lyase</keyword>
<keyword id="KW-0460">Magnesium</keyword>
<keyword id="KW-0479">Metal-binding</keyword>
<keyword id="KW-0488">Methylation</keyword>
<keyword id="KW-0503">Monooxygenase</keyword>
<keyword id="KW-0560">Oxidoreductase</keyword>
<keyword id="KW-0601">Photorespiration</keyword>
<keyword id="KW-0602">Photosynthesis</keyword>
<keyword id="KW-0934">Plastid</keyword>
<gene>
    <name evidence="1" type="primary">rbcL</name>
</gene>
<dbReference type="EC" id="4.1.1.39" evidence="1"/>
<dbReference type="EMBL" id="AJ131927">
    <property type="protein sequence ID" value="CAB64451.1"/>
    <property type="molecule type" value="Genomic_DNA"/>
</dbReference>
<dbReference type="RefSeq" id="YP_009026889.1">
    <property type="nucleotide sequence ID" value="NC_024027.1"/>
</dbReference>
<dbReference type="SMR" id="P61293"/>
<dbReference type="GeneID" id="19019311"/>
<dbReference type="GO" id="GO:0009507">
    <property type="term" value="C:chloroplast"/>
    <property type="evidence" value="ECO:0007669"/>
    <property type="project" value="UniProtKB-SubCell"/>
</dbReference>
<dbReference type="GO" id="GO:0000287">
    <property type="term" value="F:magnesium ion binding"/>
    <property type="evidence" value="ECO:0007669"/>
    <property type="project" value="UniProtKB-UniRule"/>
</dbReference>
<dbReference type="GO" id="GO:0004497">
    <property type="term" value="F:monooxygenase activity"/>
    <property type="evidence" value="ECO:0007669"/>
    <property type="project" value="UniProtKB-KW"/>
</dbReference>
<dbReference type="GO" id="GO:0016984">
    <property type="term" value="F:ribulose-bisphosphate carboxylase activity"/>
    <property type="evidence" value="ECO:0007669"/>
    <property type="project" value="UniProtKB-UniRule"/>
</dbReference>
<dbReference type="GO" id="GO:0009853">
    <property type="term" value="P:photorespiration"/>
    <property type="evidence" value="ECO:0007669"/>
    <property type="project" value="UniProtKB-KW"/>
</dbReference>
<dbReference type="GO" id="GO:0019253">
    <property type="term" value="P:reductive pentose-phosphate cycle"/>
    <property type="evidence" value="ECO:0007669"/>
    <property type="project" value="UniProtKB-UniRule"/>
</dbReference>
<dbReference type="CDD" id="cd08212">
    <property type="entry name" value="RuBisCO_large_I"/>
    <property type="match status" value="1"/>
</dbReference>
<dbReference type="FunFam" id="3.20.20.110:FF:000001">
    <property type="entry name" value="Ribulose bisphosphate carboxylase large chain"/>
    <property type="match status" value="1"/>
</dbReference>
<dbReference type="FunFam" id="3.30.70.150:FF:000001">
    <property type="entry name" value="Ribulose bisphosphate carboxylase large chain"/>
    <property type="match status" value="1"/>
</dbReference>
<dbReference type="Gene3D" id="3.20.20.110">
    <property type="entry name" value="Ribulose bisphosphate carboxylase, large subunit, C-terminal domain"/>
    <property type="match status" value="1"/>
</dbReference>
<dbReference type="Gene3D" id="3.30.70.150">
    <property type="entry name" value="RuBisCO large subunit, N-terminal domain"/>
    <property type="match status" value="1"/>
</dbReference>
<dbReference type="HAMAP" id="MF_01338">
    <property type="entry name" value="RuBisCO_L_type1"/>
    <property type="match status" value="1"/>
</dbReference>
<dbReference type="InterPro" id="IPR033966">
    <property type="entry name" value="RuBisCO"/>
</dbReference>
<dbReference type="InterPro" id="IPR020878">
    <property type="entry name" value="RuBisCo_large_chain_AS"/>
</dbReference>
<dbReference type="InterPro" id="IPR000685">
    <property type="entry name" value="RuBisCO_lsu_C"/>
</dbReference>
<dbReference type="InterPro" id="IPR036376">
    <property type="entry name" value="RuBisCO_lsu_C_sf"/>
</dbReference>
<dbReference type="InterPro" id="IPR017443">
    <property type="entry name" value="RuBisCO_lsu_fd_N"/>
</dbReference>
<dbReference type="InterPro" id="IPR036422">
    <property type="entry name" value="RuBisCO_lsu_N_sf"/>
</dbReference>
<dbReference type="InterPro" id="IPR020888">
    <property type="entry name" value="RuBisCO_lsuI"/>
</dbReference>
<dbReference type="NCBIfam" id="NF003252">
    <property type="entry name" value="PRK04208.1"/>
    <property type="match status" value="1"/>
</dbReference>
<dbReference type="PANTHER" id="PTHR42704">
    <property type="entry name" value="RIBULOSE BISPHOSPHATE CARBOXYLASE"/>
    <property type="match status" value="1"/>
</dbReference>
<dbReference type="PANTHER" id="PTHR42704:SF15">
    <property type="entry name" value="RIBULOSE BISPHOSPHATE CARBOXYLASE LARGE CHAIN"/>
    <property type="match status" value="1"/>
</dbReference>
<dbReference type="Pfam" id="PF00016">
    <property type="entry name" value="RuBisCO_large"/>
    <property type="match status" value="1"/>
</dbReference>
<dbReference type="Pfam" id="PF02788">
    <property type="entry name" value="RuBisCO_large_N"/>
    <property type="match status" value="1"/>
</dbReference>
<dbReference type="SFLD" id="SFLDG01052">
    <property type="entry name" value="RuBisCO"/>
    <property type="match status" value="1"/>
</dbReference>
<dbReference type="SFLD" id="SFLDS00014">
    <property type="entry name" value="RuBisCO"/>
    <property type="match status" value="1"/>
</dbReference>
<dbReference type="SFLD" id="SFLDG00301">
    <property type="entry name" value="RuBisCO-like_proteins"/>
    <property type="match status" value="1"/>
</dbReference>
<dbReference type="SUPFAM" id="SSF51649">
    <property type="entry name" value="RuBisCo, C-terminal domain"/>
    <property type="match status" value="1"/>
</dbReference>
<dbReference type="SUPFAM" id="SSF54966">
    <property type="entry name" value="RuBisCO, large subunit, small (N-terminal) domain"/>
    <property type="match status" value="1"/>
</dbReference>
<dbReference type="PROSITE" id="PS00157">
    <property type="entry name" value="RUBISCO_LARGE"/>
    <property type="match status" value="1"/>
</dbReference>
<protein>
    <recommendedName>
        <fullName evidence="1">Ribulose bisphosphate carboxylase large chain</fullName>
        <shortName evidence="1">RuBisCO large subunit</shortName>
        <ecNumber evidence="1">4.1.1.39</ecNumber>
    </recommendedName>
</protein>
<reference key="1">
    <citation type="submission" date="1999-01" db="EMBL/GenBank/DDBJ databases">
        <authorList>
            <person name="Savolainen V."/>
        </authorList>
    </citation>
    <scope>NUCLEOTIDE SEQUENCE [GENOMIC DNA]</scope>
    <source>
        <strain>Isolate Qiu 3 NCU</strain>
    </source>
</reference>
<organism>
    <name type="scientific">Magnolia tripetala</name>
    <name type="common">Umbrella-tree</name>
    <name type="synonym">Magnolia virginiana var. tripetala</name>
    <dbReference type="NCBI Taxonomy" id="44926"/>
    <lineage>
        <taxon>Eukaryota</taxon>
        <taxon>Viridiplantae</taxon>
        <taxon>Streptophyta</taxon>
        <taxon>Embryophyta</taxon>
        <taxon>Tracheophyta</taxon>
        <taxon>Spermatophyta</taxon>
        <taxon>Magnoliopsida</taxon>
        <taxon>Magnoliidae</taxon>
        <taxon>Magnoliales</taxon>
        <taxon>Magnoliaceae</taxon>
        <taxon>Magnolia</taxon>
    </lineage>
</organism>
<comment type="function">
    <text evidence="1">RuBisCO catalyzes two reactions: the carboxylation of D-ribulose 1,5-bisphosphate, the primary event in carbon dioxide fixation, as well as the oxidative fragmentation of the pentose substrate in the photorespiration process. Both reactions occur simultaneously and in competition at the same active site.</text>
</comment>
<comment type="catalytic activity">
    <reaction evidence="1">
        <text>2 (2R)-3-phosphoglycerate + 2 H(+) = D-ribulose 1,5-bisphosphate + CO2 + H2O</text>
        <dbReference type="Rhea" id="RHEA:23124"/>
        <dbReference type="ChEBI" id="CHEBI:15377"/>
        <dbReference type="ChEBI" id="CHEBI:15378"/>
        <dbReference type="ChEBI" id="CHEBI:16526"/>
        <dbReference type="ChEBI" id="CHEBI:57870"/>
        <dbReference type="ChEBI" id="CHEBI:58272"/>
        <dbReference type="EC" id="4.1.1.39"/>
    </reaction>
</comment>
<comment type="catalytic activity">
    <reaction evidence="1">
        <text>D-ribulose 1,5-bisphosphate + O2 = 2-phosphoglycolate + (2R)-3-phosphoglycerate + 2 H(+)</text>
        <dbReference type="Rhea" id="RHEA:36631"/>
        <dbReference type="ChEBI" id="CHEBI:15378"/>
        <dbReference type="ChEBI" id="CHEBI:15379"/>
        <dbReference type="ChEBI" id="CHEBI:57870"/>
        <dbReference type="ChEBI" id="CHEBI:58033"/>
        <dbReference type="ChEBI" id="CHEBI:58272"/>
    </reaction>
</comment>
<comment type="cofactor">
    <cofactor evidence="1">
        <name>Mg(2+)</name>
        <dbReference type="ChEBI" id="CHEBI:18420"/>
    </cofactor>
    <text evidence="1">Binds 1 Mg(2+) ion per subunit.</text>
</comment>
<comment type="subunit">
    <text evidence="1">Heterohexadecamer of 8 large chains and 8 small chains; disulfide-linked. The disulfide link is formed within the large subunit homodimers.</text>
</comment>
<comment type="subcellular location">
    <subcellularLocation>
        <location>Plastid</location>
        <location>Chloroplast</location>
    </subcellularLocation>
</comment>
<comment type="PTM">
    <text evidence="1">The disulfide bond which can form in the large chain dimeric partners within the hexadecamer appears to be associated with oxidative stress and protein turnover.</text>
</comment>
<comment type="miscellaneous">
    <text evidence="1">The basic functional RuBisCO is composed of a large chain homodimer in a 'head-to-tail' conformation. In form I RuBisCO this homodimer is arranged in a barrel-like tetramer with the small subunits forming a tetrameric 'cap' on each end of the 'barrel'.</text>
</comment>
<comment type="similarity">
    <text evidence="1">Belongs to the RuBisCO large chain family. Type I subfamily.</text>
</comment>
<evidence type="ECO:0000255" key="1">
    <source>
        <dbReference type="HAMAP-Rule" id="MF_01338"/>
    </source>
</evidence>